<dbReference type="EMBL" id="AP009370">
    <property type="protein sequence ID" value="BAF50131.1"/>
    <property type="molecule type" value="Genomic_DNA"/>
</dbReference>
<dbReference type="RefSeq" id="YP_001123307.1">
    <property type="nucleotide sequence ID" value="NC_009269.1"/>
</dbReference>
<dbReference type="GeneID" id="4961904"/>
<dbReference type="GO" id="GO:0009507">
    <property type="term" value="C:chloroplast"/>
    <property type="evidence" value="ECO:0007669"/>
    <property type="project" value="UniProtKB-SubCell"/>
</dbReference>
<dbReference type="GO" id="GO:1990904">
    <property type="term" value="C:ribonucleoprotein complex"/>
    <property type="evidence" value="ECO:0007669"/>
    <property type="project" value="UniProtKB-KW"/>
</dbReference>
<dbReference type="GO" id="GO:0005840">
    <property type="term" value="C:ribosome"/>
    <property type="evidence" value="ECO:0007669"/>
    <property type="project" value="UniProtKB-KW"/>
</dbReference>
<dbReference type="GO" id="GO:0003735">
    <property type="term" value="F:structural constituent of ribosome"/>
    <property type="evidence" value="ECO:0007669"/>
    <property type="project" value="InterPro"/>
</dbReference>
<dbReference type="GO" id="GO:0006412">
    <property type="term" value="P:translation"/>
    <property type="evidence" value="ECO:0007669"/>
    <property type="project" value="UniProtKB-UniRule"/>
</dbReference>
<dbReference type="FunFam" id="2.20.28.120:FF:000004">
    <property type="entry name" value="50S ribosomal protein L33, chloroplastic"/>
    <property type="match status" value="1"/>
</dbReference>
<dbReference type="Gene3D" id="2.20.28.120">
    <property type="entry name" value="Ribosomal protein L33"/>
    <property type="match status" value="1"/>
</dbReference>
<dbReference type="HAMAP" id="MF_00294">
    <property type="entry name" value="Ribosomal_bL33"/>
    <property type="match status" value="1"/>
</dbReference>
<dbReference type="InterPro" id="IPR001705">
    <property type="entry name" value="Ribosomal_bL33"/>
</dbReference>
<dbReference type="InterPro" id="IPR018264">
    <property type="entry name" value="Ribosomal_bL33_CS"/>
</dbReference>
<dbReference type="InterPro" id="IPR038584">
    <property type="entry name" value="Ribosomal_bL33_sf"/>
</dbReference>
<dbReference type="InterPro" id="IPR011332">
    <property type="entry name" value="Ribosomal_zn-bd"/>
</dbReference>
<dbReference type="NCBIfam" id="NF001764">
    <property type="entry name" value="PRK00504.1"/>
    <property type="match status" value="1"/>
</dbReference>
<dbReference type="NCBIfam" id="NF001860">
    <property type="entry name" value="PRK00595.1"/>
    <property type="match status" value="1"/>
</dbReference>
<dbReference type="NCBIfam" id="TIGR01023">
    <property type="entry name" value="rpmG_bact"/>
    <property type="match status" value="1"/>
</dbReference>
<dbReference type="PANTHER" id="PTHR43168">
    <property type="entry name" value="50S RIBOSOMAL PROTEIN L33, CHLOROPLASTIC"/>
    <property type="match status" value="1"/>
</dbReference>
<dbReference type="PANTHER" id="PTHR43168:SF2">
    <property type="entry name" value="LARGE RIBOSOMAL SUBUNIT PROTEIN BL33C"/>
    <property type="match status" value="1"/>
</dbReference>
<dbReference type="Pfam" id="PF00471">
    <property type="entry name" value="Ribosomal_L33"/>
    <property type="match status" value="1"/>
</dbReference>
<dbReference type="SUPFAM" id="SSF57829">
    <property type="entry name" value="Zn-binding ribosomal proteins"/>
    <property type="match status" value="1"/>
</dbReference>
<dbReference type="PROSITE" id="PS00582">
    <property type="entry name" value="RIBOSOMAL_L33"/>
    <property type="match status" value="1"/>
</dbReference>
<protein>
    <recommendedName>
        <fullName evidence="1">Large ribosomal subunit protein bL33c</fullName>
    </recommendedName>
    <alternativeName>
        <fullName evidence="2">50S ribosomal protein L33, chloroplastic</fullName>
    </alternativeName>
</protein>
<keyword id="KW-0150">Chloroplast</keyword>
<keyword id="KW-0934">Plastid</keyword>
<keyword id="KW-0687">Ribonucleoprotein</keyword>
<keyword id="KW-0689">Ribosomal protein</keyword>
<accession>A4QKC6</accession>
<sequence>MAKGKDVRVTIILECTSCVRNDIKKESAGISRYITQKNRHNTPSRLELRKFCPYCSKHTIHGEIKK</sequence>
<evidence type="ECO:0000255" key="1">
    <source>
        <dbReference type="HAMAP-Rule" id="MF_00294"/>
    </source>
</evidence>
<evidence type="ECO:0000305" key="2"/>
<comment type="subcellular location">
    <subcellularLocation>
        <location>Plastid</location>
        <location>Chloroplast</location>
    </subcellularLocation>
</comment>
<comment type="similarity">
    <text evidence="1">Belongs to the bacterial ribosomal protein bL33 family.</text>
</comment>
<geneLocation type="chloroplast"/>
<name>RK33_BARVE</name>
<gene>
    <name evidence="1" type="primary">rpl33</name>
</gene>
<proteinExistence type="inferred from homology"/>
<organism>
    <name type="scientific">Barbarea verna</name>
    <name type="common">Land cress</name>
    <name type="synonym">Erysimum vernum</name>
    <dbReference type="NCBI Taxonomy" id="50458"/>
    <lineage>
        <taxon>Eukaryota</taxon>
        <taxon>Viridiplantae</taxon>
        <taxon>Streptophyta</taxon>
        <taxon>Embryophyta</taxon>
        <taxon>Tracheophyta</taxon>
        <taxon>Spermatophyta</taxon>
        <taxon>Magnoliopsida</taxon>
        <taxon>eudicotyledons</taxon>
        <taxon>Gunneridae</taxon>
        <taxon>Pentapetalae</taxon>
        <taxon>rosids</taxon>
        <taxon>malvids</taxon>
        <taxon>Brassicales</taxon>
        <taxon>Brassicaceae</taxon>
        <taxon>Cardamineae</taxon>
        <taxon>Barbarea</taxon>
    </lineage>
</organism>
<feature type="chain" id="PRO_0000356785" description="Large ribosomal subunit protein bL33c">
    <location>
        <begin position="1"/>
        <end position="66"/>
    </location>
</feature>
<reference key="1">
    <citation type="submission" date="2007-03" db="EMBL/GenBank/DDBJ databases">
        <title>Sequencing analysis of Barbarea verna chloroplast DNA.</title>
        <authorList>
            <person name="Hosouchi T."/>
            <person name="Tsuruoka H."/>
            <person name="Kotani H."/>
        </authorList>
    </citation>
    <scope>NUCLEOTIDE SEQUENCE [LARGE SCALE GENOMIC DNA]</scope>
</reference>